<organism>
    <name type="scientific">Pyrococcus furiosus (strain ATCC 43587 / DSM 3638 / JCM 8422 / Vc1)</name>
    <dbReference type="NCBI Taxonomy" id="186497"/>
    <lineage>
        <taxon>Archaea</taxon>
        <taxon>Methanobacteriati</taxon>
        <taxon>Methanobacteriota</taxon>
        <taxon>Thermococci</taxon>
        <taxon>Thermococcales</taxon>
        <taxon>Thermococcaceae</taxon>
        <taxon>Pyrococcus</taxon>
    </lineage>
</organism>
<evidence type="ECO:0000305" key="1"/>
<feature type="chain" id="PRO_0000293128" description="Uncharacterized protein PF0383">
    <location>
        <begin position="1"/>
        <end position="111"/>
    </location>
</feature>
<comment type="similarity">
    <text evidence="1">Belongs to the UPF0440 family.</text>
</comment>
<accession>Q8U3S2</accession>
<proteinExistence type="inferred from homology"/>
<keyword id="KW-1185">Reference proteome</keyword>
<dbReference type="EMBL" id="AE009950">
    <property type="protein sequence ID" value="AAL80507.1"/>
    <property type="molecule type" value="Genomic_DNA"/>
</dbReference>
<dbReference type="RefSeq" id="WP_011011497.1">
    <property type="nucleotide sequence ID" value="NZ_CP023154.1"/>
</dbReference>
<dbReference type="SMR" id="Q8U3S2"/>
<dbReference type="STRING" id="186497.PF0383"/>
<dbReference type="PaxDb" id="186497-PF0383"/>
<dbReference type="KEGG" id="pfu:PF0383"/>
<dbReference type="PATRIC" id="fig|186497.12.peg.398"/>
<dbReference type="eggNOG" id="arCOG05854">
    <property type="taxonomic scope" value="Archaea"/>
</dbReference>
<dbReference type="HOGENOM" id="CLU_2271176_0_0_2"/>
<dbReference type="OrthoDB" id="85298at2157"/>
<dbReference type="PhylomeDB" id="Q8U3S2"/>
<dbReference type="Proteomes" id="UP000001013">
    <property type="component" value="Chromosome"/>
</dbReference>
<dbReference type="Gene3D" id="3.30.300.100">
    <property type="entry name" value="MTH677-like"/>
    <property type="match status" value="1"/>
</dbReference>
<dbReference type="InterPro" id="IPR024502">
    <property type="entry name" value="DUF3194"/>
</dbReference>
<dbReference type="InterPro" id="IPR035954">
    <property type="entry name" value="MTH677-like_sf"/>
</dbReference>
<dbReference type="Pfam" id="PF11419">
    <property type="entry name" value="DUF3194"/>
    <property type="match status" value="1"/>
</dbReference>
<gene>
    <name type="ordered locus">PF0383</name>
</gene>
<sequence>MKKVIHIGLPELSEEELIRVGEIGQKIIINYIFDHLAKSEVRDLEVTARINRGETLDLELEVYVEVPIFVKVDVESLIEEALDKAYEAIEDYLRRISNERGEKAQRTSEEP</sequence>
<protein>
    <recommendedName>
        <fullName>Uncharacterized protein PF0383</fullName>
    </recommendedName>
</protein>
<reference key="1">
    <citation type="journal article" date="1999" name="Genetics">
        <title>Divergence of the hyperthermophilic archaea Pyrococcus furiosus and P. horikoshii inferred from complete genomic sequences.</title>
        <authorList>
            <person name="Maeder D.L."/>
            <person name="Weiss R.B."/>
            <person name="Dunn D.M."/>
            <person name="Cherry J.L."/>
            <person name="Gonzalez J.M."/>
            <person name="DiRuggiero J."/>
            <person name="Robb F.T."/>
        </authorList>
    </citation>
    <scope>NUCLEOTIDE SEQUENCE [LARGE SCALE GENOMIC DNA]</scope>
    <source>
        <strain>ATCC 43587 / DSM 3638 / JCM 8422 / Vc1</strain>
    </source>
</reference>
<name>Y383_PYRFU</name>